<accession>P06282</accession>
<accession>Q2M8L4</accession>
<gene>
    <name type="primary">cdh</name>
    <name type="ordered locus">b3918</name>
    <name type="ordered locus">JW3889</name>
</gene>
<organism>
    <name type="scientific">Escherichia coli (strain K12)</name>
    <dbReference type="NCBI Taxonomy" id="83333"/>
    <lineage>
        <taxon>Bacteria</taxon>
        <taxon>Pseudomonadati</taxon>
        <taxon>Pseudomonadota</taxon>
        <taxon>Gammaproteobacteria</taxon>
        <taxon>Enterobacterales</taxon>
        <taxon>Enterobacteriaceae</taxon>
        <taxon>Escherichia</taxon>
    </lineage>
</organism>
<protein>
    <recommendedName>
        <fullName>CDP-diacylglycerol pyrophosphatase</fullName>
        <ecNumber>3.6.1.26</ecNumber>
    </recommendedName>
    <alternativeName>
        <fullName>CDP-diacylglycerol phosphatidylhydrolase</fullName>
    </alternativeName>
    <alternativeName>
        <fullName>CDP-diglyceride hydrolase</fullName>
    </alternativeName>
</protein>
<evidence type="ECO:0000255" key="1"/>
<evidence type="ECO:0000305" key="2"/>
<feature type="chain" id="PRO_0000198573" description="CDP-diacylglycerol pyrophosphatase">
    <location>
        <begin position="1"/>
        <end position="251"/>
    </location>
</feature>
<feature type="transmembrane region" description="Helical" evidence="1">
    <location>
        <begin position="4"/>
        <end position="24"/>
    </location>
</feature>
<comment type="catalytic activity">
    <reaction>
        <text>a CDP-1,2-diacyl-sn-glycerol + H2O = a 1,2-diacyl-sn-glycero-3-phosphate + CMP + 2 H(+)</text>
        <dbReference type="Rhea" id="RHEA:15221"/>
        <dbReference type="ChEBI" id="CHEBI:15377"/>
        <dbReference type="ChEBI" id="CHEBI:15378"/>
        <dbReference type="ChEBI" id="CHEBI:58332"/>
        <dbReference type="ChEBI" id="CHEBI:58608"/>
        <dbReference type="ChEBI" id="CHEBI:60377"/>
        <dbReference type="EC" id="3.6.1.26"/>
    </reaction>
</comment>
<comment type="pathway">
    <text>Phospholipid metabolism; CDP-diacylglycerol degradation; phosphatidate from CDP-diacylglycerol: step 1/1.</text>
</comment>
<comment type="subcellular location">
    <subcellularLocation>
        <location>Cell inner membrane</location>
        <topology>Single-pass membrane protein</topology>
    </subcellularLocation>
</comment>
<comment type="similarity">
    <text evidence="2">Belongs to the Cdh family.</text>
</comment>
<comment type="sequence caution" evidence="2">
    <conflict type="frameshift">
        <sequence resource="EMBL-CDS" id="CAA26358"/>
    </conflict>
</comment>
<dbReference type="EC" id="3.6.1.26"/>
<dbReference type="EMBL" id="M11331">
    <property type="protein sequence ID" value="AAA23543.1"/>
    <property type="molecule type" value="Genomic_DNA"/>
</dbReference>
<dbReference type="EMBL" id="X02519">
    <property type="protein sequence ID" value="CAA26358.1"/>
    <property type="status" value="ALT_FRAME"/>
    <property type="molecule type" value="Genomic_DNA"/>
</dbReference>
<dbReference type="EMBL" id="L19201">
    <property type="protein sequence ID" value="AAB03050.1"/>
    <property type="molecule type" value="Genomic_DNA"/>
</dbReference>
<dbReference type="EMBL" id="U00096">
    <property type="protein sequence ID" value="AAC76900.1"/>
    <property type="molecule type" value="Genomic_DNA"/>
</dbReference>
<dbReference type="EMBL" id="AP009048">
    <property type="protein sequence ID" value="BAE77392.1"/>
    <property type="molecule type" value="Genomic_DNA"/>
</dbReference>
<dbReference type="PIR" id="A01019">
    <property type="entry name" value="PSECCD"/>
</dbReference>
<dbReference type="RefSeq" id="NP_418353.1">
    <property type="nucleotide sequence ID" value="NC_000913.3"/>
</dbReference>
<dbReference type="RefSeq" id="WP_001326656.1">
    <property type="nucleotide sequence ID" value="NZ_SSZK01000014.1"/>
</dbReference>
<dbReference type="SMR" id="P06282"/>
<dbReference type="BioGRID" id="4261218">
    <property type="interactions" value="162"/>
</dbReference>
<dbReference type="FunCoup" id="P06282">
    <property type="interactions" value="39"/>
</dbReference>
<dbReference type="IntAct" id="P06282">
    <property type="interactions" value="3"/>
</dbReference>
<dbReference type="STRING" id="511145.b3918"/>
<dbReference type="jPOST" id="P06282"/>
<dbReference type="PaxDb" id="511145-b3918"/>
<dbReference type="EnsemblBacteria" id="AAC76900">
    <property type="protein sequence ID" value="AAC76900"/>
    <property type="gene ID" value="b3918"/>
</dbReference>
<dbReference type="GeneID" id="948410"/>
<dbReference type="KEGG" id="ecj:JW3889"/>
<dbReference type="KEGG" id="eco:b3918"/>
<dbReference type="KEGG" id="ecoc:C3026_21180"/>
<dbReference type="PATRIC" id="fig|1411691.4.peg.2787"/>
<dbReference type="EchoBASE" id="EB0136"/>
<dbReference type="eggNOG" id="COG2134">
    <property type="taxonomic scope" value="Bacteria"/>
</dbReference>
<dbReference type="HOGENOM" id="CLU_077117_0_1_6"/>
<dbReference type="InParanoid" id="P06282"/>
<dbReference type="OMA" id="CLPNYEK"/>
<dbReference type="OrthoDB" id="481399at2"/>
<dbReference type="PhylomeDB" id="P06282"/>
<dbReference type="BioCyc" id="EcoCyc:CDPDIGLYPYPHOSPHA-MONOMER"/>
<dbReference type="BioCyc" id="MetaCyc:CDPDIGLYPYPHOSPHA-MONOMER"/>
<dbReference type="UniPathway" id="UPA00609">
    <property type="reaction ID" value="UER00664"/>
</dbReference>
<dbReference type="PRO" id="PR:P06282"/>
<dbReference type="Proteomes" id="UP000000625">
    <property type="component" value="Chromosome"/>
</dbReference>
<dbReference type="GO" id="GO:0005886">
    <property type="term" value="C:plasma membrane"/>
    <property type="evidence" value="ECO:0000314"/>
    <property type="project" value="EcoCyc"/>
</dbReference>
<dbReference type="GO" id="GO:0008715">
    <property type="term" value="F:CDP-diacylglycerol diphosphatase activity"/>
    <property type="evidence" value="ECO:0000314"/>
    <property type="project" value="EcoCyc"/>
</dbReference>
<dbReference type="GO" id="GO:0046342">
    <property type="term" value="P:CDP-diacylglycerol catabolic process"/>
    <property type="evidence" value="ECO:0000315"/>
    <property type="project" value="EcoCyc"/>
</dbReference>
<dbReference type="GO" id="GO:0008654">
    <property type="term" value="P:phospholipid biosynthetic process"/>
    <property type="evidence" value="ECO:0007669"/>
    <property type="project" value="UniProtKB-KW"/>
</dbReference>
<dbReference type="FunFam" id="3.30.428.30:FF:000001">
    <property type="entry name" value="CDP-diacylglycerol pyrophosphatase"/>
    <property type="match status" value="1"/>
</dbReference>
<dbReference type="Gene3D" id="3.30.428.30">
    <property type="entry name" value="HIT family - CDH-like"/>
    <property type="match status" value="1"/>
</dbReference>
<dbReference type="HAMAP" id="MF_00319">
    <property type="entry name" value="Cdh"/>
    <property type="match status" value="1"/>
</dbReference>
<dbReference type="InterPro" id="IPR003763">
    <property type="entry name" value="CDP-diacylglyc_Pase"/>
</dbReference>
<dbReference type="InterPro" id="IPR015993">
    <property type="entry name" value="CDP-diacylglyc_Pase_proteobac"/>
</dbReference>
<dbReference type="InterPro" id="IPR036265">
    <property type="entry name" value="HIT-like_sf"/>
</dbReference>
<dbReference type="NCBIfam" id="TIGR00672">
    <property type="entry name" value="cdh"/>
    <property type="match status" value="1"/>
</dbReference>
<dbReference type="NCBIfam" id="NF003986">
    <property type="entry name" value="PRK05471.1-5"/>
    <property type="match status" value="1"/>
</dbReference>
<dbReference type="NCBIfam" id="NF003987">
    <property type="entry name" value="PRK05471.1-6"/>
    <property type="match status" value="1"/>
</dbReference>
<dbReference type="Pfam" id="PF02611">
    <property type="entry name" value="CDH"/>
    <property type="match status" value="1"/>
</dbReference>
<dbReference type="PIRSF" id="PIRSF001273">
    <property type="entry name" value="CDH"/>
    <property type="match status" value="1"/>
</dbReference>
<dbReference type="SUPFAM" id="SSF54197">
    <property type="entry name" value="HIT-like"/>
    <property type="match status" value="1"/>
</dbReference>
<name>CDH_ECOLI</name>
<reference key="1">
    <citation type="journal article" date="1985" name="J. Biol. Chem.">
        <title>Molecular cloning and sequencing of the gene for CDP-diglyceride hydrolase of Escherichia coli.</title>
        <authorList>
            <person name="Icho T."/>
            <person name="Bulawa C.E."/>
            <person name="Raetz C.R.H."/>
        </authorList>
    </citation>
    <scope>NUCLEOTIDE SEQUENCE [GENOMIC DNA]</scope>
</reference>
<reference key="2">
    <citation type="journal article" date="1985" name="Eur. J. Biochem.">
        <title>Nucleotide sequence and high-level expression of the major Escherichia coli phosphofructokinase.</title>
        <authorList>
            <person name="Hellinga H.W."/>
            <person name="Evans P.R."/>
        </authorList>
    </citation>
    <scope>NUCLEOTIDE SEQUENCE [GENOMIC DNA]</scope>
</reference>
<reference key="3">
    <citation type="journal article" date="1993" name="Nucleic Acids Res.">
        <title>Analysis of the Escherichia coli genome. III. DNA sequence of the region from 87.2 to 89.2 minutes.</title>
        <authorList>
            <person name="Plunkett G. III"/>
            <person name="Burland V."/>
            <person name="Daniels D.L."/>
            <person name="Blattner F.R."/>
        </authorList>
    </citation>
    <scope>NUCLEOTIDE SEQUENCE [LARGE SCALE GENOMIC DNA]</scope>
    <source>
        <strain>K12 / MG1655 / ATCC 47076</strain>
    </source>
</reference>
<reference key="4">
    <citation type="journal article" date="1997" name="Science">
        <title>The complete genome sequence of Escherichia coli K-12.</title>
        <authorList>
            <person name="Blattner F.R."/>
            <person name="Plunkett G. III"/>
            <person name="Bloch C.A."/>
            <person name="Perna N.T."/>
            <person name="Burland V."/>
            <person name="Riley M."/>
            <person name="Collado-Vides J."/>
            <person name="Glasner J.D."/>
            <person name="Rode C.K."/>
            <person name="Mayhew G.F."/>
            <person name="Gregor J."/>
            <person name="Davis N.W."/>
            <person name="Kirkpatrick H.A."/>
            <person name="Goeden M.A."/>
            <person name="Rose D.J."/>
            <person name="Mau B."/>
            <person name="Shao Y."/>
        </authorList>
    </citation>
    <scope>NUCLEOTIDE SEQUENCE [LARGE SCALE GENOMIC DNA]</scope>
    <source>
        <strain>K12 / MG1655 / ATCC 47076</strain>
    </source>
</reference>
<reference key="5">
    <citation type="journal article" date="2006" name="Mol. Syst. Biol.">
        <title>Highly accurate genome sequences of Escherichia coli K-12 strains MG1655 and W3110.</title>
        <authorList>
            <person name="Hayashi K."/>
            <person name="Morooka N."/>
            <person name="Yamamoto Y."/>
            <person name="Fujita K."/>
            <person name="Isono K."/>
            <person name="Choi S."/>
            <person name="Ohtsubo E."/>
            <person name="Baba T."/>
            <person name="Wanner B.L."/>
            <person name="Mori H."/>
            <person name="Horiuchi T."/>
        </authorList>
    </citation>
    <scope>NUCLEOTIDE SEQUENCE [LARGE SCALE GENOMIC DNA]</scope>
    <source>
        <strain>K12 / W3110 / ATCC 27325 / DSM 5911</strain>
    </source>
</reference>
<keyword id="KW-0997">Cell inner membrane</keyword>
<keyword id="KW-1003">Cell membrane</keyword>
<keyword id="KW-0378">Hydrolase</keyword>
<keyword id="KW-0444">Lipid biosynthesis</keyword>
<keyword id="KW-0443">Lipid metabolism</keyword>
<keyword id="KW-0472">Membrane</keyword>
<keyword id="KW-0594">Phospholipid biosynthesis</keyword>
<keyword id="KW-1208">Phospholipid metabolism</keyword>
<keyword id="KW-1185">Reference proteome</keyword>
<keyword id="KW-0812">Transmembrane</keyword>
<keyword id="KW-1133">Transmembrane helix</keyword>
<sequence length="251" mass="28451">MKKAGLLFLVMIVIAVVAAGIGYWKLTGEESDTLRKIVLEECLPNQQQNQNPSPCAEVKPNAGYVVLKDLNGPLQYLLMPTYRINGTESPLLTDPSTPNFFWLAWQARDFMSKKYGQPVPDRAVSLAINSRTGRTQNHFHIHISCIRPDVRKQLDNNLANISSRWLPLPGGLRGHEYLARRVTESELVQRSPFMMLAEEVPEAREHMGRYGLAMVRQSDNSFVLLATQRNLLTLNRASAEEIQDHQCEILR</sequence>
<proteinExistence type="inferred from homology"/>